<evidence type="ECO:0000255" key="1">
    <source>
        <dbReference type="HAMAP-Rule" id="MF_00093"/>
    </source>
</evidence>
<reference key="1">
    <citation type="journal article" date="2009" name="J. Bacteriol.">
        <title>Genome sequence of Azotobacter vinelandii, an obligate aerobe specialized to support diverse anaerobic metabolic processes.</title>
        <authorList>
            <person name="Setubal J.C."/>
            <person name="Dos Santos P."/>
            <person name="Goldman B.S."/>
            <person name="Ertesvaag H."/>
            <person name="Espin G."/>
            <person name="Rubio L.M."/>
            <person name="Valla S."/>
            <person name="Almeida N.F."/>
            <person name="Balasubramanian D."/>
            <person name="Cromes L."/>
            <person name="Curatti L."/>
            <person name="Du Z."/>
            <person name="Godsy E."/>
            <person name="Goodner B."/>
            <person name="Hellner-Burris K."/>
            <person name="Hernandez J.A."/>
            <person name="Houmiel K."/>
            <person name="Imperial J."/>
            <person name="Kennedy C."/>
            <person name="Larson T.J."/>
            <person name="Latreille P."/>
            <person name="Ligon L.S."/>
            <person name="Lu J."/>
            <person name="Maerk M."/>
            <person name="Miller N.M."/>
            <person name="Norton S."/>
            <person name="O'Carroll I.P."/>
            <person name="Paulsen I."/>
            <person name="Raulfs E.C."/>
            <person name="Roemer R."/>
            <person name="Rosser J."/>
            <person name="Segura D."/>
            <person name="Slater S."/>
            <person name="Stricklin S.L."/>
            <person name="Studholme D.J."/>
            <person name="Sun J."/>
            <person name="Viana C.J."/>
            <person name="Wallin E."/>
            <person name="Wang B."/>
            <person name="Wheeler C."/>
            <person name="Zhu H."/>
            <person name="Dean D.R."/>
            <person name="Dixon R."/>
            <person name="Wood D."/>
        </authorList>
    </citation>
    <scope>NUCLEOTIDE SEQUENCE [LARGE SCALE GENOMIC DNA]</scope>
    <source>
        <strain>DJ / ATCC BAA-1303</strain>
    </source>
</reference>
<protein>
    <recommendedName>
        <fullName evidence="1">Peptide chain release factor 1</fullName>
        <shortName evidence="1">RF-1</shortName>
    </recommendedName>
</protein>
<name>RF1_AZOVD</name>
<keyword id="KW-0963">Cytoplasm</keyword>
<keyword id="KW-0488">Methylation</keyword>
<keyword id="KW-0648">Protein biosynthesis</keyword>
<dbReference type="EMBL" id="CP001157">
    <property type="protein sequence ID" value="ACO80279.1"/>
    <property type="molecule type" value="Genomic_DNA"/>
</dbReference>
<dbReference type="RefSeq" id="WP_012702652.1">
    <property type="nucleotide sequence ID" value="NC_012560.1"/>
</dbReference>
<dbReference type="SMR" id="C1DEV0"/>
<dbReference type="STRING" id="322710.Avin_41470"/>
<dbReference type="EnsemblBacteria" id="ACO80279">
    <property type="protein sequence ID" value="ACO80279"/>
    <property type="gene ID" value="Avin_41470"/>
</dbReference>
<dbReference type="GeneID" id="88187078"/>
<dbReference type="KEGG" id="avn:Avin_41470"/>
<dbReference type="eggNOG" id="COG0216">
    <property type="taxonomic scope" value="Bacteria"/>
</dbReference>
<dbReference type="HOGENOM" id="CLU_036856_0_1_6"/>
<dbReference type="OrthoDB" id="9806673at2"/>
<dbReference type="Proteomes" id="UP000002424">
    <property type="component" value="Chromosome"/>
</dbReference>
<dbReference type="GO" id="GO:0005737">
    <property type="term" value="C:cytoplasm"/>
    <property type="evidence" value="ECO:0007669"/>
    <property type="project" value="UniProtKB-SubCell"/>
</dbReference>
<dbReference type="GO" id="GO:0016149">
    <property type="term" value="F:translation release factor activity, codon specific"/>
    <property type="evidence" value="ECO:0007669"/>
    <property type="project" value="UniProtKB-UniRule"/>
</dbReference>
<dbReference type="FunFam" id="3.30.160.20:FF:000004">
    <property type="entry name" value="Peptide chain release factor 1"/>
    <property type="match status" value="1"/>
</dbReference>
<dbReference type="FunFam" id="3.30.70.1660:FF:000002">
    <property type="entry name" value="Peptide chain release factor 1"/>
    <property type="match status" value="1"/>
</dbReference>
<dbReference type="FunFam" id="3.30.70.1660:FF:000004">
    <property type="entry name" value="Peptide chain release factor 1"/>
    <property type="match status" value="1"/>
</dbReference>
<dbReference type="Gene3D" id="3.30.160.20">
    <property type="match status" value="1"/>
</dbReference>
<dbReference type="Gene3D" id="3.30.70.1660">
    <property type="match status" value="1"/>
</dbReference>
<dbReference type="Gene3D" id="6.10.140.1950">
    <property type="match status" value="1"/>
</dbReference>
<dbReference type="HAMAP" id="MF_00093">
    <property type="entry name" value="Rel_fac_1"/>
    <property type="match status" value="1"/>
</dbReference>
<dbReference type="InterPro" id="IPR005139">
    <property type="entry name" value="PCRF"/>
</dbReference>
<dbReference type="InterPro" id="IPR000352">
    <property type="entry name" value="Pep_chain_release_fac_I"/>
</dbReference>
<dbReference type="InterPro" id="IPR045853">
    <property type="entry name" value="Pep_chain_release_fac_I_sf"/>
</dbReference>
<dbReference type="InterPro" id="IPR050057">
    <property type="entry name" value="Prokaryotic/Mito_RF"/>
</dbReference>
<dbReference type="InterPro" id="IPR004373">
    <property type="entry name" value="RF-1"/>
</dbReference>
<dbReference type="NCBIfam" id="TIGR00019">
    <property type="entry name" value="prfA"/>
    <property type="match status" value="1"/>
</dbReference>
<dbReference type="NCBIfam" id="NF001859">
    <property type="entry name" value="PRK00591.1"/>
    <property type="match status" value="1"/>
</dbReference>
<dbReference type="PANTHER" id="PTHR43804">
    <property type="entry name" value="LD18447P"/>
    <property type="match status" value="1"/>
</dbReference>
<dbReference type="PANTHER" id="PTHR43804:SF7">
    <property type="entry name" value="LD18447P"/>
    <property type="match status" value="1"/>
</dbReference>
<dbReference type="Pfam" id="PF03462">
    <property type="entry name" value="PCRF"/>
    <property type="match status" value="1"/>
</dbReference>
<dbReference type="Pfam" id="PF00472">
    <property type="entry name" value="RF-1"/>
    <property type="match status" value="1"/>
</dbReference>
<dbReference type="SMART" id="SM00937">
    <property type="entry name" value="PCRF"/>
    <property type="match status" value="1"/>
</dbReference>
<dbReference type="SUPFAM" id="SSF75620">
    <property type="entry name" value="Release factor"/>
    <property type="match status" value="1"/>
</dbReference>
<dbReference type="PROSITE" id="PS00745">
    <property type="entry name" value="RF_PROK_I"/>
    <property type="match status" value="1"/>
</dbReference>
<comment type="function">
    <text evidence="1">Peptide chain release factor 1 directs the termination of translation in response to the peptide chain termination codons UAG and UAA.</text>
</comment>
<comment type="subcellular location">
    <subcellularLocation>
        <location evidence="1">Cytoplasm</location>
    </subcellularLocation>
</comment>
<comment type="PTM">
    <text evidence="1">Methylated by PrmC. Methylation increases the termination efficiency of RF1.</text>
</comment>
<comment type="similarity">
    <text evidence="1">Belongs to the prokaryotic/mitochondrial release factor family.</text>
</comment>
<gene>
    <name evidence="1" type="primary">prfA</name>
    <name type="ordered locus">Avin_41470</name>
</gene>
<sequence>MKASLLNKLDLLHDRYEELTALLGDAEVIAEQGRFRAYSKEYAEVEPVVAAYREFRKVRDDLAGAQALLKDSDPDLREMAAEEVAEARERLAGLEDRLQRMLLPRDPNDARNVFLEIRAGTGGDEAAIFAGDLFRMYSRYAEKQGWRIEILSENPGEHGGYKEIITRVEGDNVYGKLKFESGAHRVQRVPETESQGRIHTSACTVAVLPEPDEQAAIEINPAELRVDTYRSSGAGGQHVNKTDSAIRITHLPTGIVVECQEERSQHKNRAKAMAWLAAKLQDRQDAAAHREISETRRLLVGSGDRSERIRTYNFPQGRVTEHRINLTLYALDEVMAGGVEAVIEPLLSEYQADQLAALGD</sequence>
<feature type="chain" id="PRO_1000202685" description="Peptide chain release factor 1">
    <location>
        <begin position="1"/>
        <end position="360"/>
    </location>
</feature>
<feature type="modified residue" description="N5-methylglutamine" evidence="1">
    <location>
        <position position="237"/>
    </location>
</feature>
<proteinExistence type="inferred from homology"/>
<accession>C1DEV0</accession>
<organism>
    <name type="scientific">Azotobacter vinelandii (strain DJ / ATCC BAA-1303)</name>
    <dbReference type="NCBI Taxonomy" id="322710"/>
    <lineage>
        <taxon>Bacteria</taxon>
        <taxon>Pseudomonadati</taxon>
        <taxon>Pseudomonadota</taxon>
        <taxon>Gammaproteobacteria</taxon>
        <taxon>Pseudomonadales</taxon>
        <taxon>Pseudomonadaceae</taxon>
        <taxon>Azotobacter</taxon>
    </lineage>
</organism>